<evidence type="ECO:0000250" key="1"/>
<evidence type="ECO:0000255" key="2"/>
<evidence type="ECO:0000269" key="3">
    <source>
    </source>
</evidence>
<evidence type="ECO:0000303" key="4">
    <source>
    </source>
</evidence>
<evidence type="ECO:0000303" key="5">
    <source>
    </source>
</evidence>
<evidence type="ECO:0000303" key="6">
    <source ref="1"/>
</evidence>
<evidence type="ECO:0000305" key="7"/>
<evidence type="ECO:0000305" key="8">
    <source>
    </source>
</evidence>
<keyword id="KW-0025">Alternative splicing</keyword>
<keyword id="KW-0472">Membrane</keyword>
<keyword id="KW-0496">Mitochondrion</keyword>
<keyword id="KW-0999">Mitochondrion inner membrane</keyword>
<keyword id="KW-1267">Proteomics identification</keyword>
<keyword id="KW-1185">Reference proteome</keyword>
<keyword id="KW-0677">Repeat</keyword>
<keyword id="KW-0812">Transmembrane</keyword>
<keyword id="KW-1133">Transmembrane helix</keyword>
<keyword id="KW-0813">Transport</keyword>
<reference key="1">
    <citation type="submission" date="2003-12" db="EMBL/GenBank/DDBJ databases">
        <authorList>
            <person name="Zhou G."/>
            <person name="Zhong G."/>
            <person name="Ke R."/>
            <person name="Li H."/>
            <person name="Shen C."/>
            <person name="Lin L."/>
            <person name="Yang S."/>
        </authorList>
    </citation>
    <scope>NUCLEOTIDE SEQUENCE [MRNA] (ISOFORM 3)</scope>
</reference>
<reference key="2">
    <citation type="journal article" date="2004" name="Nat. Genet.">
        <title>Complete sequencing and characterization of 21,243 full-length human cDNAs.</title>
        <authorList>
            <person name="Ota T."/>
            <person name="Suzuki Y."/>
            <person name="Nishikawa T."/>
            <person name="Otsuki T."/>
            <person name="Sugiyama T."/>
            <person name="Irie R."/>
            <person name="Wakamatsu A."/>
            <person name="Hayashi K."/>
            <person name="Sato H."/>
            <person name="Nagai K."/>
            <person name="Kimura K."/>
            <person name="Makita H."/>
            <person name="Sekine M."/>
            <person name="Obayashi M."/>
            <person name="Nishi T."/>
            <person name="Shibahara T."/>
            <person name="Tanaka T."/>
            <person name="Ishii S."/>
            <person name="Yamamoto J."/>
            <person name="Saito K."/>
            <person name="Kawai Y."/>
            <person name="Isono Y."/>
            <person name="Nakamura Y."/>
            <person name="Nagahari K."/>
            <person name="Murakami K."/>
            <person name="Yasuda T."/>
            <person name="Iwayanagi T."/>
            <person name="Wagatsuma M."/>
            <person name="Shiratori A."/>
            <person name="Sudo H."/>
            <person name="Hosoiri T."/>
            <person name="Kaku Y."/>
            <person name="Kodaira H."/>
            <person name="Kondo H."/>
            <person name="Sugawara M."/>
            <person name="Takahashi M."/>
            <person name="Kanda K."/>
            <person name="Yokoi T."/>
            <person name="Furuya T."/>
            <person name="Kikkawa E."/>
            <person name="Omura Y."/>
            <person name="Abe K."/>
            <person name="Kamihara K."/>
            <person name="Katsuta N."/>
            <person name="Sato K."/>
            <person name="Tanikawa M."/>
            <person name="Yamazaki M."/>
            <person name="Ninomiya K."/>
            <person name="Ishibashi T."/>
            <person name="Yamashita H."/>
            <person name="Murakawa K."/>
            <person name="Fujimori K."/>
            <person name="Tanai H."/>
            <person name="Kimata M."/>
            <person name="Watanabe M."/>
            <person name="Hiraoka S."/>
            <person name="Chiba Y."/>
            <person name="Ishida S."/>
            <person name="Ono Y."/>
            <person name="Takiguchi S."/>
            <person name="Watanabe S."/>
            <person name="Yosida M."/>
            <person name="Hotuta T."/>
            <person name="Kusano J."/>
            <person name="Kanehori K."/>
            <person name="Takahashi-Fujii A."/>
            <person name="Hara H."/>
            <person name="Tanase T.-O."/>
            <person name="Nomura Y."/>
            <person name="Togiya S."/>
            <person name="Komai F."/>
            <person name="Hara R."/>
            <person name="Takeuchi K."/>
            <person name="Arita M."/>
            <person name="Imose N."/>
            <person name="Musashino K."/>
            <person name="Yuuki H."/>
            <person name="Oshima A."/>
            <person name="Sasaki N."/>
            <person name="Aotsuka S."/>
            <person name="Yoshikawa Y."/>
            <person name="Matsunawa H."/>
            <person name="Ichihara T."/>
            <person name="Shiohata N."/>
            <person name="Sano S."/>
            <person name="Moriya S."/>
            <person name="Momiyama H."/>
            <person name="Satoh N."/>
            <person name="Takami S."/>
            <person name="Terashima Y."/>
            <person name="Suzuki O."/>
            <person name="Nakagawa S."/>
            <person name="Senoh A."/>
            <person name="Mizoguchi H."/>
            <person name="Goto Y."/>
            <person name="Shimizu F."/>
            <person name="Wakebe H."/>
            <person name="Hishigaki H."/>
            <person name="Watanabe T."/>
            <person name="Sugiyama A."/>
            <person name="Takemoto M."/>
            <person name="Kawakami B."/>
            <person name="Yamazaki M."/>
            <person name="Watanabe K."/>
            <person name="Kumagai A."/>
            <person name="Itakura S."/>
            <person name="Fukuzumi Y."/>
            <person name="Fujimori Y."/>
            <person name="Komiyama M."/>
            <person name="Tashiro H."/>
            <person name="Tanigami A."/>
            <person name="Fujiwara T."/>
            <person name="Ono T."/>
            <person name="Yamada K."/>
            <person name="Fujii Y."/>
            <person name="Ozaki K."/>
            <person name="Hirao M."/>
            <person name="Ohmori Y."/>
            <person name="Kawabata A."/>
            <person name="Hikiji T."/>
            <person name="Kobatake N."/>
            <person name="Inagaki H."/>
            <person name="Ikema Y."/>
            <person name="Okamoto S."/>
            <person name="Okitani R."/>
            <person name="Kawakami T."/>
            <person name="Noguchi S."/>
            <person name="Itoh T."/>
            <person name="Shigeta K."/>
            <person name="Senba T."/>
            <person name="Matsumura K."/>
            <person name="Nakajima Y."/>
            <person name="Mizuno T."/>
            <person name="Morinaga M."/>
            <person name="Sasaki M."/>
            <person name="Togashi T."/>
            <person name="Oyama M."/>
            <person name="Hata H."/>
            <person name="Watanabe M."/>
            <person name="Komatsu T."/>
            <person name="Mizushima-Sugano J."/>
            <person name="Satoh T."/>
            <person name="Shirai Y."/>
            <person name="Takahashi Y."/>
            <person name="Nakagawa K."/>
            <person name="Okumura K."/>
            <person name="Nagase T."/>
            <person name="Nomura N."/>
            <person name="Kikuchi H."/>
            <person name="Masuho Y."/>
            <person name="Yamashita R."/>
            <person name="Nakai K."/>
            <person name="Yada T."/>
            <person name="Nakamura Y."/>
            <person name="Ohara O."/>
            <person name="Isogai T."/>
            <person name="Sugano S."/>
        </authorList>
    </citation>
    <scope>NUCLEOTIDE SEQUENCE [LARGE SCALE MRNA] (ISOFORM 4)</scope>
    <source>
        <tissue>Testis</tissue>
    </source>
</reference>
<reference key="3">
    <citation type="journal article" date="2004" name="Genome Res.">
        <title>The status, quality, and expansion of the NIH full-length cDNA project: the Mammalian Gene Collection (MGC).</title>
        <authorList>
            <consortium name="The MGC Project Team"/>
        </authorList>
    </citation>
    <scope>NUCLEOTIDE SEQUENCE [LARGE SCALE MRNA] (ISOFORMS 1; 2 AND 4)</scope>
    <source>
        <tissue>Skin</tissue>
    </source>
</reference>
<reference key="4">
    <citation type="journal article" date="2006" name="Genomics">
        <title>Fourteen novel human members of mitochondrial solute carrier family 25 (SLC25) widely expressed in the central nervous system.</title>
        <authorList>
            <person name="Haitina T."/>
            <person name="Lindblom J."/>
            <person name="Renstroem T."/>
            <person name="Fredriksson R."/>
        </authorList>
    </citation>
    <scope>IDENTIFICATION</scope>
</reference>
<reference key="5">
    <citation type="journal article" date="2008" name="J. Biol. Chem.">
        <title>alpha-Isopropylmalate, a leucine biosynthesis intermediate in yeast, is transported by the mitochondrial oxalacetate carrier.</title>
        <authorList>
            <person name="Marobbio C.M."/>
            <person name="Giannuzzi G."/>
            <person name="Paradies E."/>
            <person name="Pierri C.L."/>
            <person name="Palmieri F."/>
        </authorList>
    </citation>
    <scope>FUNCTION</scope>
    <scope>TRANSPORTER ACTIVITY</scope>
</reference>
<name>S2535_HUMAN</name>
<feature type="chain" id="PRO_0000291794" description="Solute carrier family 25 member 35">
    <location>
        <begin position="1"/>
        <end position="300"/>
    </location>
</feature>
<feature type="transmembrane region" description="Helical; Name=1" evidence="2">
    <location>
        <begin position="38"/>
        <end position="58"/>
    </location>
</feature>
<feature type="transmembrane region" description="Helical; Name=2" evidence="2">
    <location>
        <begin position="59"/>
        <end position="79"/>
    </location>
</feature>
<feature type="transmembrane region" description="Helical; Name=3" evidence="2">
    <location>
        <begin position="91"/>
        <end position="119"/>
    </location>
</feature>
<feature type="transmembrane region" description="Helical; Name=4" evidence="2">
    <location>
        <begin position="169"/>
        <end position="190"/>
    </location>
</feature>
<feature type="transmembrane region" description="Helical; Name=5" evidence="2">
    <location>
        <begin position="205"/>
        <end position="225"/>
    </location>
</feature>
<feature type="transmembrane region" description="Helical; Name=6" evidence="2">
    <location>
        <begin position="277"/>
        <end position="300"/>
    </location>
</feature>
<feature type="repeat" description="Solcar 1">
    <location>
        <begin position="1"/>
        <end position="90"/>
    </location>
</feature>
<feature type="repeat" description="Solcar 2">
    <location>
        <begin position="100"/>
        <end position="193"/>
    </location>
</feature>
<feature type="repeat" description="Solcar 3">
    <location>
        <begin position="203"/>
        <end position="294"/>
    </location>
</feature>
<feature type="splice variant" id="VSP_026237" description="In isoform 4." evidence="4 5">
    <original>GLMYRGILDALLQTARTEGIFGMYKGIGASYFRLGPHTILSLFFWDQLRSLYYTDTK</original>
    <variation>NRVPKFSATSCSASAPLLGTKDVRIVKGQTGHQLFKVTQAPGCSPILLGTQS</variation>
    <location>
        <begin position="244"/>
        <end position="300"/>
    </location>
</feature>
<feature type="splice variant" id="VSP_026238" description="In isoform 3." evidence="6">
    <location>
        <begin position="265"/>
        <end position="268"/>
    </location>
</feature>
<feature type="splice variant" id="VSP_026239" description="In isoform 2 and isoform 3." evidence="5 6">
    <original>GIGASYFRLGPHTILSLFFWDQLRSLYYTDTK</original>
    <variation>EPSPQVLSNIMQCFSAFTGDQRC</variation>
    <location>
        <begin position="269"/>
        <end position="300"/>
    </location>
</feature>
<feature type="sequence conflict" description="In Ref. 1; AAR92153." evidence="7" ref="1">
    <original>I</original>
    <variation>V</variation>
    <location>
        <position position="79"/>
    </location>
</feature>
<proteinExistence type="evidence at protein level"/>
<dbReference type="EMBL" id="AY498866">
    <property type="protein sequence ID" value="AAR92153.1"/>
    <property type="molecule type" value="mRNA"/>
</dbReference>
<dbReference type="EMBL" id="AK097536">
    <property type="protein sequence ID" value="BAC05091.1"/>
    <property type="molecule type" value="mRNA"/>
</dbReference>
<dbReference type="EMBL" id="BC101329">
    <property type="protein sequence ID" value="AAI01330.2"/>
    <property type="molecule type" value="mRNA"/>
</dbReference>
<dbReference type="EMBL" id="BC101330">
    <property type="protein sequence ID" value="AAI01331.1"/>
    <property type="molecule type" value="mRNA"/>
</dbReference>
<dbReference type="EMBL" id="BC105995">
    <property type="protein sequence ID" value="AAI05996.1"/>
    <property type="molecule type" value="mRNA"/>
</dbReference>
<dbReference type="CCDS" id="CCDS11138.1">
    <molecule id="Q3KQZ1-4"/>
</dbReference>
<dbReference type="CCDS" id="CCDS82067.1">
    <molecule id="Q3KQZ1-1"/>
</dbReference>
<dbReference type="RefSeq" id="NP_001307799.1">
    <molecule id="Q3KQZ1-1"/>
    <property type="nucleotide sequence ID" value="NM_001320870.2"/>
</dbReference>
<dbReference type="RefSeq" id="NP_001307800.1">
    <molecule id="Q3KQZ1-4"/>
    <property type="nucleotide sequence ID" value="NM_001320871.2"/>
</dbReference>
<dbReference type="RefSeq" id="NP_001307801.1">
    <molecule id="Q3KQZ1-4"/>
    <property type="nucleotide sequence ID" value="NM_001320872.2"/>
</dbReference>
<dbReference type="RefSeq" id="NP_958928.1">
    <molecule id="Q3KQZ1-4"/>
    <property type="nucleotide sequence ID" value="NM_201520.3"/>
</dbReference>
<dbReference type="RefSeq" id="XP_011522148.1">
    <property type="nucleotide sequence ID" value="XM_011523846.1"/>
</dbReference>
<dbReference type="RefSeq" id="XP_047291955.1">
    <molecule id="Q3KQZ1-2"/>
    <property type="nucleotide sequence ID" value="XM_047435999.1"/>
</dbReference>
<dbReference type="RefSeq" id="XP_047291956.1">
    <molecule id="Q3KQZ1-3"/>
    <property type="nucleotide sequence ID" value="XM_047436000.1"/>
</dbReference>
<dbReference type="RefSeq" id="XP_054172063.1">
    <molecule id="Q3KQZ1-2"/>
    <property type="nucleotide sequence ID" value="XM_054316088.1"/>
</dbReference>
<dbReference type="RefSeq" id="XP_054172064.1">
    <molecule id="Q3KQZ1-3"/>
    <property type="nucleotide sequence ID" value="XM_054316089.1"/>
</dbReference>
<dbReference type="SMR" id="Q3KQZ1"/>
<dbReference type="BioGRID" id="134361">
    <property type="interactions" value="16"/>
</dbReference>
<dbReference type="FunCoup" id="Q3KQZ1">
    <property type="interactions" value="128"/>
</dbReference>
<dbReference type="IntAct" id="Q3KQZ1">
    <property type="interactions" value="11"/>
</dbReference>
<dbReference type="STRING" id="9606.ENSP00000464231"/>
<dbReference type="TCDB" id="2.A.29.15.2">
    <property type="family name" value="the mitochondrial carrier (mc) family"/>
</dbReference>
<dbReference type="iPTMnet" id="Q3KQZ1"/>
<dbReference type="PhosphoSitePlus" id="Q3KQZ1"/>
<dbReference type="SwissPalm" id="Q3KQZ1"/>
<dbReference type="BioMuta" id="SLC25A35"/>
<dbReference type="DMDM" id="121942600"/>
<dbReference type="jPOST" id="Q3KQZ1"/>
<dbReference type="MassIVE" id="Q3KQZ1"/>
<dbReference type="PaxDb" id="9606-ENSP00000369407"/>
<dbReference type="PeptideAtlas" id="Q3KQZ1"/>
<dbReference type="ProteomicsDB" id="61730">
    <molecule id="Q3KQZ1-1"/>
</dbReference>
<dbReference type="ProteomicsDB" id="61731">
    <molecule id="Q3KQZ1-2"/>
</dbReference>
<dbReference type="ProteomicsDB" id="61732">
    <molecule id="Q3KQZ1-3"/>
</dbReference>
<dbReference type="ProteomicsDB" id="61733">
    <molecule id="Q3KQZ1-4"/>
</dbReference>
<dbReference type="Pumba" id="Q3KQZ1"/>
<dbReference type="Antibodypedia" id="24621">
    <property type="antibodies" value="60 antibodies from 15 providers"/>
</dbReference>
<dbReference type="DNASU" id="399512"/>
<dbReference type="Ensembl" id="ENST00000380067.6">
    <molecule id="Q3KQZ1-4"/>
    <property type="protein sequence ID" value="ENSP00000369407.2"/>
    <property type="gene ID" value="ENSG00000125434.11"/>
</dbReference>
<dbReference type="Ensembl" id="ENST00000577745.2">
    <molecule id="Q3KQZ1-1"/>
    <property type="protein sequence ID" value="ENSP00000464231.1"/>
    <property type="gene ID" value="ENSG00000125434.11"/>
</dbReference>
<dbReference type="Ensembl" id="ENST00000579192.5">
    <molecule id="Q3KQZ1-4"/>
    <property type="protein sequence ID" value="ENSP00000462395.1"/>
    <property type="gene ID" value="ENSG00000125434.11"/>
</dbReference>
<dbReference type="Ensembl" id="ENST00000579681.5">
    <molecule id="Q3KQZ1-3"/>
    <property type="protein sequence ID" value="ENSP00000464307.1"/>
    <property type="gene ID" value="ENSG00000125434.11"/>
</dbReference>
<dbReference type="Ensembl" id="ENST00000580340.5">
    <molecule id="Q3KQZ1-4"/>
    <property type="protein sequence ID" value="ENSP00000464071.1"/>
    <property type="gene ID" value="ENSG00000125434.11"/>
</dbReference>
<dbReference type="Ensembl" id="ENST00000585311.5">
    <molecule id="Q3KQZ1-2"/>
    <property type="protein sequence ID" value="ENSP00000464191.1"/>
    <property type="gene ID" value="ENSG00000125434.11"/>
</dbReference>
<dbReference type="GeneID" id="399512"/>
<dbReference type="KEGG" id="hsa:399512"/>
<dbReference type="MANE-Select" id="ENST00000577745.2">
    <property type="protein sequence ID" value="ENSP00000464231.1"/>
    <property type="RefSeq nucleotide sequence ID" value="NM_001320870.2"/>
    <property type="RefSeq protein sequence ID" value="NP_001307799.1"/>
</dbReference>
<dbReference type="UCSC" id="uc002gkt.4">
    <molecule id="Q3KQZ1-1"/>
    <property type="organism name" value="human"/>
</dbReference>
<dbReference type="AGR" id="HGNC:31921"/>
<dbReference type="CTD" id="399512"/>
<dbReference type="DisGeNET" id="399512"/>
<dbReference type="GeneCards" id="SLC25A35"/>
<dbReference type="HGNC" id="HGNC:31921">
    <property type="gene designation" value="SLC25A35"/>
</dbReference>
<dbReference type="HPA" id="ENSG00000125434">
    <property type="expression patterns" value="Low tissue specificity"/>
</dbReference>
<dbReference type="MIM" id="610818">
    <property type="type" value="gene"/>
</dbReference>
<dbReference type="neXtProt" id="NX_Q3KQZ1"/>
<dbReference type="OpenTargets" id="ENSG00000125434"/>
<dbReference type="PharmGKB" id="PA142670907"/>
<dbReference type="VEuPathDB" id="HostDB:ENSG00000125434"/>
<dbReference type="eggNOG" id="KOG0755">
    <property type="taxonomic scope" value="Eukaryota"/>
</dbReference>
<dbReference type="GeneTree" id="ENSGT00940000160771"/>
<dbReference type="HOGENOM" id="CLU_015166_14_3_1"/>
<dbReference type="InParanoid" id="Q3KQZ1"/>
<dbReference type="OMA" id="GFYDPMR"/>
<dbReference type="OrthoDB" id="6703404at2759"/>
<dbReference type="PAN-GO" id="Q3KQZ1">
    <property type="GO annotations" value="0 GO annotations based on evolutionary models"/>
</dbReference>
<dbReference type="PhylomeDB" id="Q3KQZ1"/>
<dbReference type="TreeFam" id="TF324506"/>
<dbReference type="PathwayCommons" id="Q3KQZ1"/>
<dbReference type="SignaLink" id="Q3KQZ1"/>
<dbReference type="BioGRID-ORCS" id="399512">
    <property type="hits" value="10 hits in 1161 CRISPR screens"/>
</dbReference>
<dbReference type="ChiTaRS" id="SLC25A35">
    <property type="organism name" value="human"/>
</dbReference>
<dbReference type="GenomeRNAi" id="399512"/>
<dbReference type="Pharos" id="Q3KQZ1">
    <property type="development level" value="Tdark"/>
</dbReference>
<dbReference type="PRO" id="PR:Q3KQZ1"/>
<dbReference type="Proteomes" id="UP000005640">
    <property type="component" value="Chromosome 17"/>
</dbReference>
<dbReference type="RNAct" id="Q3KQZ1">
    <property type="molecule type" value="protein"/>
</dbReference>
<dbReference type="Bgee" id="ENSG00000125434">
    <property type="expression patterns" value="Expressed in left testis and 131 other cell types or tissues"/>
</dbReference>
<dbReference type="GO" id="GO:0005743">
    <property type="term" value="C:mitochondrial inner membrane"/>
    <property type="evidence" value="ECO:0007669"/>
    <property type="project" value="UniProtKB-SubCell"/>
</dbReference>
<dbReference type="GO" id="GO:0005739">
    <property type="term" value="C:mitochondrion"/>
    <property type="evidence" value="ECO:0006056"/>
    <property type="project" value="FlyBase"/>
</dbReference>
<dbReference type="FunFam" id="1.50.40.10:FF:000039">
    <property type="entry name" value="Solute carrier family 25 member 35"/>
    <property type="match status" value="1"/>
</dbReference>
<dbReference type="Gene3D" id="1.50.40.10">
    <property type="entry name" value="Mitochondrial carrier domain"/>
    <property type="match status" value="1"/>
</dbReference>
<dbReference type="InterPro" id="IPR051508">
    <property type="entry name" value="Mito_Carrier_Antiporter"/>
</dbReference>
<dbReference type="InterPro" id="IPR018108">
    <property type="entry name" value="Mitochondrial_sb/sol_carrier"/>
</dbReference>
<dbReference type="InterPro" id="IPR023395">
    <property type="entry name" value="Mt_carrier_dom_sf"/>
</dbReference>
<dbReference type="PANTHER" id="PTHR45928">
    <property type="entry name" value="RE38146P"/>
    <property type="match status" value="1"/>
</dbReference>
<dbReference type="PANTHER" id="PTHR45928:SF2">
    <property type="entry name" value="SOLUTE CARRIER FAMILY 25 MEMBER 35"/>
    <property type="match status" value="1"/>
</dbReference>
<dbReference type="Pfam" id="PF00153">
    <property type="entry name" value="Mito_carr"/>
    <property type="match status" value="3"/>
</dbReference>
<dbReference type="SUPFAM" id="SSF103506">
    <property type="entry name" value="Mitochondrial carrier"/>
    <property type="match status" value="1"/>
</dbReference>
<dbReference type="PROSITE" id="PS50920">
    <property type="entry name" value="SOLCAR"/>
    <property type="match status" value="3"/>
</dbReference>
<organism>
    <name type="scientific">Homo sapiens</name>
    <name type="common">Human</name>
    <dbReference type="NCBI Taxonomy" id="9606"/>
    <lineage>
        <taxon>Eukaryota</taxon>
        <taxon>Metazoa</taxon>
        <taxon>Chordata</taxon>
        <taxon>Craniata</taxon>
        <taxon>Vertebrata</taxon>
        <taxon>Euteleostomi</taxon>
        <taxon>Mammalia</taxon>
        <taxon>Eutheria</taxon>
        <taxon>Euarchontoglires</taxon>
        <taxon>Primates</taxon>
        <taxon>Haplorrhini</taxon>
        <taxon>Catarrhini</taxon>
        <taxon>Hominidae</taxon>
        <taxon>Homo</taxon>
    </lineage>
</organism>
<accession>Q3KQZ1</accession>
<accession>Q494X5</accession>
<accession>Q6RGS3</accession>
<accession>Q8N7Y5</accession>
<gene>
    <name type="primary">SLC25A35</name>
</gene>
<comment type="function">
    <text evidence="3">Putative antiporter that exchanges dicarboxylates and sulfur oxoanions across the inner membrane of mitochondria.</text>
</comment>
<comment type="catalytic activity">
    <reaction evidence="8">
        <text>a dicarboxylate(in) + sulfate(out) = a dicarboxylate(out) + sulfate(in)</text>
        <dbReference type="Rhea" id="RHEA:76595"/>
        <dbReference type="ChEBI" id="CHEBI:16189"/>
        <dbReference type="ChEBI" id="CHEBI:28965"/>
    </reaction>
</comment>
<comment type="interaction">
    <interactant intactId="EBI-13054652">
        <id>Q3KQZ1-4</id>
    </interactant>
    <interactant intactId="EBI-11961968">
        <id>P0DI81-3</id>
        <label>TRAPPC2</label>
    </interactant>
    <organismsDiffer>false</organismsDiffer>
    <experiments>3</experiments>
</comment>
<comment type="subcellular location">
    <subcellularLocation>
        <location evidence="1">Mitochondrion inner membrane</location>
        <topology evidence="1">Multi-pass membrane protein</topology>
    </subcellularLocation>
</comment>
<comment type="alternative products">
    <event type="alternative splicing"/>
    <isoform>
        <id>Q3KQZ1-1</id>
        <name>1</name>
        <sequence type="displayed"/>
    </isoform>
    <isoform>
        <id>Q3KQZ1-2</id>
        <name>2</name>
        <sequence type="described" ref="VSP_026239"/>
    </isoform>
    <isoform>
        <id>Q3KQZ1-3</id>
        <name>3</name>
        <sequence type="described" ref="VSP_026238 VSP_026239"/>
    </isoform>
    <isoform>
        <id>Q3KQZ1-4</id>
        <name>4</name>
        <sequence type="described" ref="VSP_026237"/>
    </isoform>
</comment>
<comment type="similarity">
    <text evidence="7">Belongs to the mitochondrial carrier (TC 2.A.29) family.</text>
</comment>
<sequence length="300" mass="32438">MDFLMSGLAACGACVFTNPLEVVKTRMQLQGELQAPGTYQRHYRNVFHAFITIGKVDGLAALQKGLAPALLYQFLMNGIRLGTYGLAEAGGYLHTAEGTHSPARSAAAGAMAGVMGAYLGSPIYMVKTHLQAQAASEIAVGHQYKHQGMFQALTEIGQKHGLVGLWRGALGGLPRVIVGSSTQLCTFSSTKDLLSQWEIFPPQSWKLALVAAMMSGIAVVLAMAPFDVACTRLYNQPTDAQGKGLMYRGILDALLQTARTEGIFGMYKGIGASYFRLGPHTILSLFFWDQLRSLYYTDTK</sequence>
<protein>
    <recommendedName>
        <fullName>Solute carrier family 25 member 35</fullName>
    </recommendedName>
</protein>